<evidence type="ECO:0000255" key="1">
    <source>
        <dbReference type="HAMAP-Rule" id="MF_00388"/>
    </source>
</evidence>
<feature type="chain" id="PRO_1000122772" description="UDP-3-O-acyl-N-acetylglucosamine deacetylase">
    <location>
        <begin position="1"/>
        <end position="286"/>
    </location>
</feature>
<feature type="active site" description="Proton donor" evidence="1">
    <location>
        <position position="264"/>
    </location>
</feature>
<feature type="binding site" evidence="1">
    <location>
        <position position="79"/>
    </location>
    <ligand>
        <name>Zn(2+)</name>
        <dbReference type="ChEBI" id="CHEBI:29105"/>
    </ligand>
</feature>
<feature type="binding site" evidence="1">
    <location>
        <position position="237"/>
    </location>
    <ligand>
        <name>Zn(2+)</name>
        <dbReference type="ChEBI" id="CHEBI:29105"/>
    </ligand>
</feature>
<feature type="binding site" evidence="1">
    <location>
        <position position="241"/>
    </location>
    <ligand>
        <name>Zn(2+)</name>
        <dbReference type="ChEBI" id="CHEBI:29105"/>
    </ligand>
</feature>
<accession>B0B8A7</accession>
<gene>
    <name evidence="1" type="primary">lpxC</name>
    <name type="ordered locus">CTL0795</name>
</gene>
<reference key="1">
    <citation type="journal article" date="2008" name="Genome Res.">
        <title>Chlamydia trachomatis: genome sequence analysis of lymphogranuloma venereum isolates.</title>
        <authorList>
            <person name="Thomson N.R."/>
            <person name="Holden M.T.G."/>
            <person name="Carder C."/>
            <person name="Lennard N."/>
            <person name="Lockey S.J."/>
            <person name="Marsh P."/>
            <person name="Skipp P."/>
            <person name="O'Connor C.D."/>
            <person name="Goodhead I."/>
            <person name="Norbertzcak H."/>
            <person name="Harris B."/>
            <person name="Ormond D."/>
            <person name="Rance R."/>
            <person name="Quail M.A."/>
            <person name="Parkhill J."/>
            <person name="Stephens R.S."/>
            <person name="Clarke I.N."/>
        </authorList>
    </citation>
    <scope>NUCLEOTIDE SEQUENCE [LARGE SCALE GENOMIC DNA]</scope>
    <source>
        <strain>ATCC VR-902B / DSM 19102 / 434/Bu</strain>
    </source>
</reference>
<organism>
    <name type="scientific">Chlamydia trachomatis serovar L2 (strain ATCC VR-902B / DSM 19102 / 434/Bu)</name>
    <dbReference type="NCBI Taxonomy" id="471472"/>
    <lineage>
        <taxon>Bacteria</taxon>
        <taxon>Pseudomonadati</taxon>
        <taxon>Chlamydiota</taxon>
        <taxon>Chlamydiia</taxon>
        <taxon>Chlamydiales</taxon>
        <taxon>Chlamydiaceae</taxon>
        <taxon>Chlamydia/Chlamydophila group</taxon>
        <taxon>Chlamydia</taxon>
    </lineage>
</organism>
<protein>
    <recommendedName>
        <fullName evidence="1">UDP-3-O-acyl-N-acetylglucosamine deacetylase</fullName>
        <shortName evidence="1">UDP-3-O-acyl-GlcNAc deacetylase</shortName>
        <ecNumber evidence="1">3.5.1.108</ecNumber>
    </recommendedName>
    <alternativeName>
        <fullName evidence="1">UDP-3-O-[R-3-hydroxymyristoyl]-N-acetylglucosamine deacetylase</fullName>
    </alternativeName>
</protein>
<dbReference type="EC" id="3.5.1.108" evidence="1"/>
<dbReference type="EMBL" id="AM884176">
    <property type="protein sequence ID" value="CAP04233.1"/>
    <property type="molecule type" value="Genomic_DNA"/>
</dbReference>
<dbReference type="RefSeq" id="WP_009873879.1">
    <property type="nucleotide sequence ID" value="NC_010287.1"/>
</dbReference>
<dbReference type="RefSeq" id="YP_001654866.1">
    <property type="nucleotide sequence ID" value="NC_010287.1"/>
</dbReference>
<dbReference type="SMR" id="B0B8A7"/>
<dbReference type="KEGG" id="ctb:CTL0795"/>
<dbReference type="PATRIC" id="fig|471472.4.peg.852"/>
<dbReference type="HOGENOM" id="CLU_046528_1_0_0"/>
<dbReference type="UniPathway" id="UPA00359">
    <property type="reaction ID" value="UER00478"/>
</dbReference>
<dbReference type="Proteomes" id="UP001154402">
    <property type="component" value="Chromosome"/>
</dbReference>
<dbReference type="GO" id="GO:0016020">
    <property type="term" value="C:membrane"/>
    <property type="evidence" value="ECO:0007669"/>
    <property type="project" value="GOC"/>
</dbReference>
<dbReference type="GO" id="GO:0046872">
    <property type="term" value="F:metal ion binding"/>
    <property type="evidence" value="ECO:0007669"/>
    <property type="project" value="UniProtKB-KW"/>
</dbReference>
<dbReference type="GO" id="GO:0103117">
    <property type="term" value="F:UDP-3-O-acyl-N-acetylglucosamine deacetylase activity"/>
    <property type="evidence" value="ECO:0007669"/>
    <property type="project" value="UniProtKB-UniRule"/>
</dbReference>
<dbReference type="GO" id="GO:0009245">
    <property type="term" value="P:lipid A biosynthetic process"/>
    <property type="evidence" value="ECO:0007669"/>
    <property type="project" value="UniProtKB-UniRule"/>
</dbReference>
<dbReference type="Gene3D" id="3.30.230.20">
    <property type="entry name" value="lpxc deacetylase, domain 1"/>
    <property type="match status" value="1"/>
</dbReference>
<dbReference type="Gene3D" id="3.30.1700.10">
    <property type="entry name" value="lpxc deacetylase, domain 2"/>
    <property type="match status" value="1"/>
</dbReference>
<dbReference type="HAMAP" id="MF_00388">
    <property type="entry name" value="LpxC"/>
    <property type="match status" value="1"/>
</dbReference>
<dbReference type="InterPro" id="IPR020568">
    <property type="entry name" value="Ribosomal_Su5_D2-typ_SF"/>
</dbReference>
<dbReference type="InterPro" id="IPR004463">
    <property type="entry name" value="UDP-acyl_GlcNac_deAcase"/>
</dbReference>
<dbReference type="InterPro" id="IPR011334">
    <property type="entry name" value="UDP-acyl_GlcNac_deAcase_C"/>
</dbReference>
<dbReference type="InterPro" id="IPR015870">
    <property type="entry name" value="UDP-acyl_N-AcGlcN_deAcase_N"/>
</dbReference>
<dbReference type="NCBIfam" id="TIGR00325">
    <property type="entry name" value="lpxC"/>
    <property type="match status" value="1"/>
</dbReference>
<dbReference type="PANTHER" id="PTHR33694">
    <property type="entry name" value="UDP-3-O-ACYL-N-ACETYLGLUCOSAMINE DEACETYLASE 1, MITOCHONDRIAL-RELATED"/>
    <property type="match status" value="1"/>
</dbReference>
<dbReference type="PANTHER" id="PTHR33694:SF1">
    <property type="entry name" value="UDP-3-O-ACYL-N-ACETYLGLUCOSAMINE DEACETYLASE 1, MITOCHONDRIAL-RELATED"/>
    <property type="match status" value="1"/>
</dbReference>
<dbReference type="Pfam" id="PF03331">
    <property type="entry name" value="LpxC"/>
    <property type="match status" value="1"/>
</dbReference>
<dbReference type="SUPFAM" id="SSF54211">
    <property type="entry name" value="Ribosomal protein S5 domain 2-like"/>
    <property type="match status" value="2"/>
</dbReference>
<proteinExistence type="inferred from homology"/>
<keyword id="KW-0378">Hydrolase</keyword>
<keyword id="KW-0441">Lipid A biosynthesis</keyword>
<keyword id="KW-0444">Lipid biosynthesis</keyword>
<keyword id="KW-0443">Lipid metabolism</keyword>
<keyword id="KW-0479">Metal-binding</keyword>
<keyword id="KW-0862">Zinc</keyword>
<sequence length="286" mass="31298">MLGRAQRTLKRKVCYSGVGVHFGKAAMLTLEPAEENTGVVFSRHAASEQYIPARLANVCGTGRSTTLSLDGSVISTVEHLLASLYSFGVDNVRIYCSEDEIPIGDGSAQVFMDLIDQAGIQEQEQTVQIARLAHPVYYQYQDTILAAFPSDEFKISYTLHYSHNSTIGTQYRSLVISEESFRKEIAPCRTFALYSELCFLMEKGLIGGGCVGNAVLFKDDGVISLGKLRFPDEPVRHKILDLIGDLSLVGTPFLAHVIAVGSGHSSNIALGNRILEALQHEQELVK</sequence>
<name>LPXC_CHLT2</name>
<comment type="function">
    <text evidence="1">Catalyzes the hydrolysis of UDP-3-O-myristoyl-N-acetylglucosamine to form UDP-3-O-myristoylglucosamine and acetate, the committed step in lipid A biosynthesis.</text>
</comment>
<comment type="catalytic activity">
    <reaction evidence="1">
        <text>a UDP-3-O-[(3R)-3-hydroxyacyl]-N-acetyl-alpha-D-glucosamine + H2O = a UDP-3-O-[(3R)-3-hydroxyacyl]-alpha-D-glucosamine + acetate</text>
        <dbReference type="Rhea" id="RHEA:67816"/>
        <dbReference type="ChEBI" id="CHEBI:15377"/>
        <dbReference type="ChEBI" id="CHEBI:30089"/>
        <dbReference type="ChEBI" id="CHEBI:137740"/>
        <dbReference type="ChEBI" id="CHEBI:173225"/>
        <dbReference type="EC" id="3.5.1.108"/>
    </reaction>
</comment>
<comment type="cofactor">
    <cofactor evidence="1">
        <name>Zn(2+)</name>
        <dbReference type="ChEBI" id="CHEBI:29105"/>
    </cofactor>
</comment>
<comment type="pathway">
    <text evidence="1">Glycolipid biosynthesis; lipid IV(A) biosynthesis; lipid IV(A) from (3R)-3-hydroxytetradecanoyl-[acyl-carrier-protein] and UDP-N-acetyl-alpha-D-glucosamine: step 2/6.</text>
</comment>
<comment type="similarity">
    <text evidence="1">Belongs to the LpxC family.</text>
</comment>